<evidence type="ECO:0000250" key="1"/>
<evidence type="ECO:0000305" key="2"/>
<protein>
    <recommendedName>
        <fullName>Peptide chain release factor 2</fullName>
        <shortName>RF-2</shortName>
    </recommendedName>
</protein>
<sequence length="371" mass="41473">MDPDRQADIAALDCTLTTVERVLDVEGLRSRIEKLEHEASDPHLWDDQTRAQRVTSELSHTQGELRRVEELRRRLDDLPVLYELAAEEAGAAAADAVAEADAELKSLRADIEATEVRTLLSGEYDEREALVTIRSGAGGVDAADWAEMLMRMYIRWAEQHKYPVEVFDTSYAEEAGIKSATFAVHAPFAYGTLSVEQGTHRLVRISPFDNQSRRQTSFAEVEVLPVVETTDHIDIPEGDVRVDVYRSSGPGGQSVNTTDSAVRLTHIPSGIVVTCQNEKSQLQNKIAAMRVLQAKLLERKRLEERAELDALKADGGSSWGNQMRSYVLHPYQMVKDLRTEYEVGNPAAVLDGDLDGFLEAGIRWRNRRNDD</sequence>
<proteinExistence type="inferred from homology"/>
<feature type="chain" id="PRO_0000166830" description="Peptide chain release factor 2">
    <location>
        <begin position="1"/>
        <end position="371"/>
    </location>
</feature>
<feature type="modified residue" description="N5-methylglutamine" evidence="1">
    <location>
        <position position="253"/>
    </location>
</feature>
<reference key="1">
    <citation type="journal article" date="2003" name="Proc. Natl. Acad. Sci. U.S.A.">
        <title>The complete genome sequence of Mycobacterium bovis.</title>
        <authorList>
            <person name="Garnier T."/>
            <person name="Eiglmeier K."/>
            <person name="Camus J.-C."/>
            <person name="Medina N."/>
            <person name="Mansoor H."/>
            <person name="Pryor M."/>
            <person name="Duthoy S."/>
            <person name="Grondin S."/>
            <person name="Lacroix C."/>
            <person name="Monsempe C."/>
            <person name="Simon S."/>
            <person name="Harris B."/>
            <person name="Atkin R."/>
            <person name="Doggett J."/>
            <person name="Mayes R."/>
            <person name="Keating L."/>
            <person name="Wheeler P.R."/>
            <person name="Parkhill J."/>
            <person name="Barrell B.G."/>
            <person name="Cole S.T."/>
            <person name="Gordon S.V."/>
            <person name="Hewinson R.G."/>
        </authorList>
    </citation>
    <scope>NUCLEOTIDE SEQUENCE [LARGE SCALE GENOMIC DNA]</scope>
    <source>
        <strain>ATCC BAA-935 / AF2122/97</strain>
    </source>
</reference>
<reference key="2">
    <citation type="journal article" date="2017" name="Genome Announc.">
        <title>Updated reference genome sequence and annotation of Mycobacterium bovis AF2122/97.</title>
        <authorList>
            <person name="Malone K.M."/>
            <person name="Farrell D."/>
            <person name="Stuber T.P."/>
            <person name="Schubert O.T."/>
            <person name="Aebersold R."/>
            <person name="Robbe-Austerman S."/>
            <person name="Gordon S.V."/>
        </authorList>
    </citation>
    <scope>NUCLEOTIDE SEQUENCE [LARGE SCALE GENOMIC DNA]</scope>
    <scope>GENOME REANNOTATION</scope>
    <source>
        <strain>ATCC BAA-935 / AF2122/97</strain>
    </source>
</reference>
<dbReference type="EMBL" id="LT708304">
    <property type="protein sequence ID" value="SIU01758.1"/>
    <property type="status" value="ALT_INIT"/>
    <property type="molecule type" value="Genomic_DNA"/>
</dbReference>
<dbReference type="RefSeq" id="NP_856777.1">
    <property type="nucleotide sequence ID" value="NC_002945.3"/>
</dbReference>
<dbReference type="RefSeq" id="WP_003416129.1">
    <property type="nucleotide sequence ID" value="NC_002945.4"/>
</dbReference>
<dbReference type="SMR" id="P66027"/>
<dbReference type="GeneID" id="45427104"/>
<dbReference type="KEGG" id="mbo:BQ2027_MB3132C"/>
<dbReference type="PATRIC" id="fig|233413.5.peg.3442"/>
<dbReference type="Proteomes" id="UP000001419">
    <property type="component" value="Chromosome"/>
</dbReference>
<dbReference type="GO" id="GO:0005737">
    <property type="term" value="C:cytoplasm"/>
    <property type="evidence" value="ECO:0007669"/>
    <property type="project" value="UniProtKB-SubCell"/>
</dbReference>
<dbReference type="GO" id="GO:0016149">
    <property type="term" value="F:translation release factor activity, codon specific"/>
    <property type="evidence" value="ECO:0007669"/>
    <property type="project" value="UniProtKB-UniRule"/>
</dbReference>
<dbReference type="FunFam" id="1.20.58.410:FF:000002">
    <property type="entry name" value="Peptide chain release factor 2"/>
    <property type="match status" value="1"/>
</dbReference>
<dbReference type="FunFam" id="3.30.160.20:FF:000010">
    <property type="entry name" value="Peptide chain release factor 2"/>
    <property type="match status" value="1"/>
</dbReference>
<dbReference type="Gene3D" id="3.30.160.20">
    <property type="match status" value="1"/>
</dbReference>
<dbReference type="Gene3D" id="3.30.70.1660">
    <property type="match status" value="1"/>
</dbReference>
<dbReference type="Gene3D" id="1.20.58.410">
    <property type="entry name" value="Release factor"/>
    <property type="match status" value="1"/>
</dbReference>
<dbReference type="HAMAP" id="MF_00094">
    <property type="entry name" value="Rel_fac_2"/>
    <property type="match status" value="1"/>
</dbReference>
<dbReference type="InterPro" id="IPR005139">
    <property type="entry name" value="PCRF"/>
</dbReference>
<dbReference type="InterPro" id="IPR000352">
    <property type="entry name" value="Pep_chain_release_fac_I"/>
</dbReference>
<dbReference type="InterPro" id="IPR045853">
    <property type="entry name" value="Pep_chain_release_fac_I_sf"/>
</dbReference>
<dbReference type="InterPro" id="IPR004374">
    <property type="entry name" value="PrfB"/>
</dbReference>
<dbReference type="NCBIfam" id="TIGR00020">
    <property type="entry name" value="prfB"/>
    <property type="match status" value="1"/>
</dbReference>
<dbReference type="PANTHER" id="PTHR43116:SF3">
    <property type="entry name" value="CLASS I PEPTIDE CHAIN RELEASE FACTOR"/>
    <property type="match status" value="1"/>
</dbReference>
<dbReference type="PANTHER" id="PTHR43116">
    <property type="entry name" value="PEPTIDE CHAIN RELEASE FACTOR 2"/>
    <property type="match status" value="1"/>
</dbReference>
<dbReference type="Pfam" id="PF03462">
    <property type="entry name" value="PCRF"/>
    <property type="match status" value="1"/>
</dbReference>
<dbReference type="Pfam" id="PF00472">
    <property type="entry name" value="RF-1"/>
    <property type="match status" value="1"/>
</dbReference>
<dbReference type="SMART" id="SM00937">
    <property type="entry name" value="PCRF"/>
    <property type="match status" value="1"/>
</dbReference>
<dbReference type="SUPFAM" id="SSF75620">
    <property type="entry name" value="Release factor"/>
    <property type="match status" value="1"/>
</dbReference>
<dbReference type="PROSITE" id="PS00745">
    <property type="entry name" value="RF_PROK_I"/>
    <property type="match status" value="1"/>
</dbReference>
<organism>
    <name type="scientific">Mycobacterium bovis (strain ATCC BAA-935 / AF2122/97)</name>
    <dbReference type="NCBI Taxonomy" id="233413"/>
    <lineage>
        <taxon>Bacteria</taxon>
        <taxon>Bacillati</taxon>
        <taxon>Actinomycetota</taxon>
        <taxon>Actinomycetes</taxon>
        <taxon>Mycobacteriales</taxon>
        <taxon>Mycobacteriaceae</taxon>
        <taxon>Mycobacterium</taxon>
        <taxon>Mycobacterium tuberculosis complex</taxon>
    </lineage>
</organism>
<accession>P66027</accession>
<accession>A0A1R3Y3H0</accession>
<accession>O05782</accession>
<accession>X2BMC1</accession>
<comment type="function">
    <text evidence="1">Peptide chain release factor 2 directs the termination of translation in response to the peptide chain termination codons UGA and UAA.</text>
</comment>
<comment type="subcellular location">
    <subcellularLocation>
        <location evidence="1">Cytoplasm</location>
    </subcellularLocation>
</comment>
<comment type="PTM">
    <text evidence="1">Methylated by PrmC. Methylation increases the termination efficiency of RF2 (By similarity).</text>
</comment>
<comment type="similarity">
    <text evidence="2">Belongs to the prokaryotic/mitochondrial release factor family.</text>
</comment>
<comment type="sequence caution" evidence="2">
    <conflict type="erroneous initiation">
        <sequence resource="EMBL-CDS" id="SIU01758"/>
    </conflict>
    <text>Extended N-terminus.</text>
</comment>
<keyword id="KW-0963">Cytoplasm</keyword>
<keyword id="KW-0488">Methylation</keyword>
<keyword id="KW-0648">Protein biosynthesis</keyword>
<keyword id="KW-1185">Reference proteome</keyword>
<gene>
    <name type="primary">prfB</name>
    <name type="ordered locus">BQ2027_MB3132C</name>
</gene>
<name>RF2_MYCBO</name>